<comment type="function">
    <text evidence="1">Together with the chaperonin GroEL, plays an essential role in assisting protein folding. The GroEL-GroES system forms a nano-cage that allows encapsulation of the non-native substrate proteins and provides a physical environment optimized to promote and accelerate protein folding. GroES binds to the apical surface of the GroEL ring, thereby capping the opening of the GroEL channel.</text>
</comment>
<comment type="subunit">
    <text evidence="1">Heptamer of 7 subunits arranged in a ring. Interacts with the chaperonin GroEL.</text>
</comment>
<comment type="subcellular location">
    <subcellularLocation>
        <location evidence="1">Cytoplasm</location>
    </subcellularLocation>
</comment>
<comment type="similarity">
    <text evidence="1">Belongs to the GroES chaperonin family.</text>
</comment>
<organism>
    <name type="scientific">Chlorobium phaeovibrioides (strain DSM 265 / 1930)</name>
    <name type="common">Prosthecochloris vibrioformis (strain DSM 265)</name>
    <dbReference type="NCBI Taxonomy" id="290318"/>
    <lineage>
        <taxon>Bacteria</taxon>
        <taxon>Pseudomonadati</taxon>
        <taxon>Chlorobiota</taxon>
        <taxon>Chlorobiia</taxon>
        <taxon>Chlorobiales</taxon>
        <taxon>Chlorobiaceae</taxon>
        <taxon>Chlorobium/Pelodictyon group</taxon>
        <taxon>Chlorobium</taxon>
    </lineage>
</organism>
<keyword id="KW-0143">Chaperone</keyword>
<keyword id="KW-0963">Cytoplasm</keyword>
<accession>A4SDP8</accession>
<proteinExistence type="inferred from homology"/>
<feature type="chain" id="PRO_1000082387" description="Co-chaperonin GroES">
    <location>
        <begin position="1"/>
        <end position="95"/>
    </location>
</feature>
<gene>
    <name evidence="1" type="primary">groES</name>
    <name evidence="1" type="synonym">groS</name>
    <name type="ordered locus">Cvib_0585</name>
</gene>
<dbReference type="EMBL" id="CP000607">
    <property type="protein sequence ID" value="ABP36607.1"/>
    <property type="molecule type" value="Genomic_DNA"/>
</dbReference>
<dbReference type="SMR" id="A4SDP8"/>
<dbReference type="STRING" id="290318.Cvib_0585"/>
<dbReference type="KEGG" id="pvi:Cvib_0585"/>
<dbReference type="eggNOG" id="COG0234">
    <property type="taxonomic scope" value="Bacteria"/>
</dbReference>
<dbReference type="HOGENOM" id="CLU_132825_2_0_10"/>
<dbReference type="OrthoDB" id="9806791at2"/>
<dbReference type="GO" id="GO:0005737">
    <property type="term" value="C:cytoplasm"/>
    <property type="evidence" value="ECO:0007669"/>
    <property type="project" value="UniProtKB-SubCell"/>
</dbReference>
<dbReference type="GO" id="GO:0005524">
    <property type="term" value="F:ATP binding"/>
    <property type="evidence" value="ECO:0007669"/>
    <property type="project" value="InterPro"/>
</dbReference>
<dbReference type="GO" id="GO:0046872">
    <property type="term" value="F:metal ion binding"/>
    <property type="evidence" value="ECO:0007669"/>
    <property type="project" value="TreeGrafter"/>
</dbReference>
<dbReference type="GO" id="GO:0044183">
    <property type="term" value="F:protein folding chaperone"/>
    <property type="evidence" value="ECO:0007669"/>
    <property type="project" value="InterPro"/>
</dbReference>
<dbReference type="GO" id="GO:0051087">
    <property type="term" value="F:protein-folding chaperone binding"/>
    <property type="evidence" value="ECO:0007669"/>
    <property type="project" value="TreeGrafter"/>
</dbReference>
<dbReference type="GO" id="GO:0051082">
    <property type="term" value="F:unfolded protein binding"/>
    <property type="evidence" value="ECO:0007669"/>
    <property type="project" value="TreeGrafter"/>
</dbReference>
<dbReference type="GO" id="GO:0051085">
    <property type="term" value="P:chaperone cofactor-dependent protein refolding"/>
    <property type="evidence" value="ECO:0007669"/>
    <property type="project" value="TreeGrafter"/>
</dbReference>
<dbReference type="CDD" id="cd00320">
    <property type="entry name" value="cpn10"/>
    <property type="match status" value="1"/>
</dbReference>
<dbReference type="FunFam" id="2.30.33.40:FF:000001">
    <property type="entry name" value="10 kDa chaperonin"/>
    <property type="match status" value="1"/>
</dbReference>
<dbReference type="Gene3D" id="2.30.33.40">
    <property type="entry name" value="GroES chaperonin"/>
    <property type="match status" value="1"/>
</dbReference>
<dbReference type="HAMAP" id="MF_00580">
    <property type="entry name" value="CH10"/>
    <property type="match status" value="1"/>
</dbReference>
<dbReference type="InterPro" id="IPR020818">
    <property type="entry name" value="Chaperonin_GroES"/>
</dbReference>
<dbReference type="InterPro" id="IPR037124">
    <property type="entry name" value="Chaperonin_GroES_sf"/>
</dbReference>
<dbReference type="InterPro" id="IPR018369">
    <property type="entry name" value="Chaprnonin_Cpn10_CS"/>
</dbReference>
<dbReference type="InterPro" id="IPR011032">
    <property type="entry name" value="GroES-like_sf"/>
</dbReference>
<dbReference type="NCBIfam" id="NF001527">
    <property type="entry name" value="PRK00364.1-2"/>
    <property type="match status" value="1"/>
</dbReference>
<dbReference type="NCBIfam" id="NF001529">
    <property type="entry name" value="PRK00364.1-5"/>
    <property type="match status" value="1"/>
</dbReference>
<dbReference type="NCBIfam" id="NF001531">
    <property type="entry name" value="PRK00364.2-2"/>
    <property type="match status" value="1"/>
</dbReference>
<dbReference type="NCBIfam" id="NF001533">
    <property type="entry name" value="PRK00364.2-4"/>
    <property type="match status" value="1"/>
</dbReference>
<dbReference type="NCBIfam" id="NF001534">
    <property type="entry name" value="PRK00364.2-5"/>
    <property type="match status" value="1"/>
</dbReference>
<dbReference type="PANTHER" id="PTHR10772">
    <property type="entry name" value="10 KDA HEAT SHOCK PROTEIN"/>
    <property type="match status" value="1"/>
</dbReference>
<dbReference type="PANTHER" id="PTHR10772:SF58">
    <property type="entry name" value="CO-CHAPERONIN GROES"/>
    <property type="match status" value="1"/>
</dbReference>
<dbReference type="Pfam" id="PF00166">
    <property type="entry name" value="Cpn10"/>
    <property type="match status" value="1"/>
</dbReference>
<dbReference type="PRINTS" id="PR00297">
    <property type="entry name" value="CHAPERONIN10"/>
</dbReference>
<dbReference type="SMART" id="SM00883">
    <property type="entry name" value="Cpn10"/>
    <property type="match status" value="1"/>
</dbReference>
<dbReference type="SUPFAM" id="SSF50129">
    <property type="entry name" value="GroES-like"/>
    <property type="match status" value="1"/>
</dbReference>
<dbReference type="PROSITE" id="PS00681">
    <property type="entry name" value="CHAPERONINS_CPN10"/>
    <property type="match status" value="1"/>
</dbReference>
<reference key="1">
    <citation type="submission" date="2007-03" db="EMBL/GenBank/DDBJ databases">
        <title>Complete sequence of Prosthecochloris vibrioformis DSM 265.</title>
        <authorList>
            <consortium name="US DOE Joint Genome Institute"/>
            <person name="Copeland A."/>
            <person name="Lucas S."/>
            <person name="Lapidus A."/>
            <person name="Barry K."/>
            <person name="Detter J.C."/>
            <person name="Glavina del Rio T."/>
            <person name="Hammon N."/>
            <person name="Israni S."/>
            <person name="Pitluck S."/>
            <person name="Schmutz J."/>
            <person name="Larimer F."/>
            <person name="Land M."/>
            <person name="Hauser L."/>
            <person name="Mikhailova N."/>
            <person name="Li T."/>
            <person name="Overmann J."/>
            <person name="Schuster S.C."/>
            <person name="Bryant D.A."/>
            <person name="Richardson P."/>
        </authorList>
    </citation>
    <scope>NUCLEOTIDE SEQUENCE [LARGE SCALE GENOMIC DNA]</scope>
    <source>
        <strain>DSM 265 / 1930</strain>
    </source>
</reference>
<evidence type="ECO:0000255" key="1">
    <source>
        <dbReference type="HAMAP-Rule" id="MF_00580"/>
    </source>
</evidence>
<sequence>MNLKPLADRVIVKPAPAEEKTKGGLYIPDTGKEKPMYGEVVAVGAGKMSDSGQLLEMPVKAGDKVLYGKYSGTEVSVEGEDYLIMRESDIFAILG</sequence>
<protein>
    <recommendedName>
        <fullName evidence="1">Co-chaperonin GroES</fullName>
    </recommendedName>
    <alternativeName>
        <fullName evidence="1">10 kDa chaperonin</fullName>
    </alternativeName>
    <alternativeName>
        <fullName evidence="1">Chaperonin-10</fullName>
        <shortName evidence="1">Cpn10</shortName>
    </alternativeName>
</protein>
<name>CH10_CHLPM</name>